<gene>
    <name type="primary">OPG051</name>
    <name type="ORF">C11L</name>
    <name type="ORF">F7L</name>
</gene>
<keyword id="KW-0244">Early protein</keyword>
<keyword id="KW-1185">Reference proteome</keyword>
<organism>
    <name type="scientific">Variola virus (isolate Human/India/Ind3/1967)</name>
    <name type="common">VARV</name>
    <name type="synonym">Smallpox virus</name>
    <dbReference type="NCBI Taxonomy" id="587200"/>
    <lineage>
        <taxon>Viruses</taxon>
        <taxon>Varidnaviria</taxon>
        <taxon>Bamfordvirae</taxon>
        <taxon>Nucleocytoviricota</taxon>
        <taxon>Pokkesviricetes</taxon>
        <taxon>Chitovirales</taxon>
        <taxon>Poxviridae</taxon>
        <taxon>Chordopoxvirinae</taxon>
        <taxon>Orthopoxvirus</taxon>
        <taxon>Variola virus</taxon>
    </lineage>
</organism>
<protein>
    <recommendedName>
        <fullName>Protein OPG051</fullName>
    </recommendedName>
    <alternativeName>
        <fullName>Protein F7</fullName>
    </alternativeName>
</protein>
<evidence type="ECO:0000250" key="1">
    <source>
        <dbReference type="UniProtKB" id="P24359"/>
    </source>
</evidence>
<evidence type="ECO:0000305" key="2"/>
<reference key="1">
    <citation type="journal article" date="1993" name="Virus Res.">
        <title>Analysis of the nucleotide sequence of a 43 kbp segment of the genome of variola virus India-1967 strain.</title>
        <authorList>
            <person name="Shchelkunov S.N."/>
            <person name="Blinov V.M."/>
            <person name="Resenchuk S.M."/>
            <person name="Totmenin A.V."/>
            <person name="Sandakhchiev L.S."/>
        </authorList>
    </citation>
    <scope>NUCLEOTIDE SEQUENCE [GENOMIC DNA]</scope>
</reference>
<reference key="2">
    <citation type="journal article" date="1993" name="FEBS Lett.">
        <title>Genes of variola and vaccinia viruses necessary to overcome the host protective mechanisms.</title>
        <authorList>
            <person name="Shchelkunov S.N."/>
            <person name="Blinov V.M."/>
            <person name="Sandakhchiev L.S."/>
        </authorList>
    </citation>
    <scope>NUCLEOTIDE SEQUENCE [GENOMIC DNA]</scope>
</reference>
<proteinExistence type="inferred from homology"/>
<feature type="chain" id="PRO_0000099486" description="Protein OPG051">
    <location>
        <begin position="1"/>
        <end position="79"/>
    </location>
</feature>
<comment type="induction">
    <text evidence="1">Expressed in the early phase of the viral replicative cycle.</text>
</comment>
<comment type="similarity">
    <text evidence="2">Belongs to the orthopoxvirus OPG051 family.</text>
</comment>
<name>PG051_VAR67</name>
<organismHost>
    <name type="scientific">Homo sapiens</name>
    <name type="common">Human</name>
    <dbReference type="NCBI Taxonomy" id="9606"/>
</organismHost>
<dbReference type="EMBL" id="X69198">
    <property type="protein sequence ID" value="CAA48972.1"/>
    <property type="molecule type" value="Genomic_DNA"/>
</dbReference>
<dbReference type="PIR" id="B36840">
    <property type="entry name" value="B36840"/>
</dbReference>
<dbReference type="RefSeq" id="NP_042075.1">
    <property type="nucleotide sequence ID" value="NC_001611.1"/>
</dbReference>
<dbReference type="GeneID" id="1486567"/>
<dbReference type="KEGG" id="vg:1486567"/>
<dbReference type="Proteomes" id="UP000002060">
    <property type="component" value="Segment"/>
</dbReference>
<dbReference type="InterPro" id="IPR008725">
    <property type="entry name" value="Orthopox_F7"/>
</dbReference>
<dbReference type="Pfam" id="PF05813">
    <property type="entry name" value="Orthopox_F7"/>
    <property type="match status" value="1"/>
</dbReference>
<accession>P0DOQ1</accession>
<accession>P33867</accession>
<sequence length="79" mass="9282">MTLVMGSCCGRFCDAKNKFKKDDIEEEGEGYCDYKNLNDLDEATRIEFGPLYIINEEKSDINTLDIKRRYRHAIESVYF</sequence>